<keyword id="KW-0963">Cytoplasm</keyword>
<keyword id="KW-0238">DNA-binding</keyword>
<keyword id="KW-0804">Transcription</keyword>
<keyword id="KW-0805">Transcription regulation</keyword>
<evidence type="ECO:0000255" key="1">
    <source>
        <dbReference type="HAMAP-Rule" id="MF_00918"/>
    </source>
</evidence>
<comment type="subcellular location">
    <subcellularLocation>
        <location evidence="1">Cytoplasm</location>
    </subcellularLocation>
</comment>
<comment type="similarity">
    <text evidence="1">Belongs to the TACO1 family. YeeN subfamily.</text>
</comment>
<proteinExistence type="inferred from homology"/>
<feature type="chain" id="PRO_1000200113" description="Probable transcriptional regulatory protein SPJ_1919">
    <location>
        <begin position="1"/>
        <end position="238"/>
    </location>
</feature>
<sequence length="238" mass="25830">MGRKWANIVAKKTAKDGANSKVYAKFGVEIYVAAKKGDPDPESNSALKFVIDRAKQAQVPKHIIDKAIDKAKGNTDETFTEGRYEGFGPNGSMLIVDTLTSNVNRTAANVRAAFGKNGGNMGASGSVSYLFDNKGVIVFGGEDADAVFEQLLEADVDVDDVEAQEGTITVYTAPTDLHKAIVALRESGIEEFQVTELEMIPQSEVELSGEDLETFEKLYSVLEDDEDVQKIYTNVDGF</sequence>
<name>Y1919_STRZJ</name>
<dbReference type="EMBL" id="CP000919">
    <property type="protein sequence ID" value="ACO18749.1"/>
    <property type="molecule type" value="Genomic_DNA"/>
</dbReference>
<dbReference type="RefSeq" id="WP_000532876.1">
    <property type="nucleotide sequence ID" value="NC_012466.1"/>
</dbReference>
<dbReference type="SMR" id="C1CGK9"/>
<dbReference type="KEGG" id="sjj:SPJ_1919"/>
<dbReference type="HOGENOM" id="CLU_062974_2_0_9"/>
<dbReference type="Proteomes" id="UP000002206">
    <property type="component" value="Chromosome"/>
</dbReference>
<dbReference type="GO" id="GO:0005829">
    <property type="term" value="C:cytosol"/>
    <property type="evidence" value="ECO:0007669"/>
    <property type="project" value="TreeGrafter"/>
</dbReference>
<dbReference type="GO" id="GO:0003677">
    <property type="term" value="F:DNA binding"/>
    <property type="evidence" value="ECO:0007669"/>
    <property type="project" value="UniProtKB-UniRule"/>
</dbReference>
<dbReference type="GO" id="GO:0006355">
    <property type="term" value="P:regulation of DNA-templated transcription"/>
    <property type="evidence" value="ECO:0007669"/>
    <property type="project" value="UniProtKB-UniRule"/>
</dbReference>
<dbReference type="FunFam" id="1.10.10.200:FF:000003">
    <property type="entry name" value="Probable transcriptional regulatory protein YeeN"/>
    <property type="match status" value="1"/>
</dbReference>
<dbReference type="FunFam" id="3.30.70.980:FF:000004">
    <property type="entry name" value="Probable transcriptional regulatory protein YeeN"/>
    <property type="match status" value="1"/>
</dbReference>
<dbReference type="Gene3D" id="1.10.10.200">
    <property type="match status" value="1"/>
</dbReference>
<dbReference type="Gene3D" id="3.30.70.980">
    <property type="match status" value="2"/>
</dbReference>
<dbReference type="HAMAP" id="MF_00693">
    <property type="entry name" value="Transcrip_reg_TACO1"/>
    <property type="match status" value="1"/>
</dbReference>
<dbReference type="HAMAP" id="MF_00918">
    <property type="entry name" value="Transcrip_reg_TACO1_YeeN"/>
    <property type="match status" value="1"/>
</dbReference>
<dbReference type="InterPro" id="IPR017856">
    <property type="entry name" value="Integrase-like_N"/>
</dbReference>
<dbReference type="InterPro" id="IPR048300">
    <property type="entry name" value="TACO1_YebC-like_2nd/3rd_dom"/>
</dbReference>
<dbReference type="InterPro" id="IPR049083">
    <property type="entry name" value="TACO1_YebC_N"/>
</dbReference>
<dbReference type="InterPro" id="IPR002876">
    <property type="entry name" value="Transcrip_reg_TACO1-like"/>
</dbReference>
<dbReference type="InterPro" id="IPR026564">
    <property type="entry name" value="Transcrip_reg_TACO1-like_dom3"/>
</dbReference>
<dbReference type="InterPro" id="IPR026562">
    <property type="entry name" value="Transcrip_reg_TACO1_YeeN"/>
</dbReference>
<dbReference type="InterPro" id="IPR029072">
    <property type="entry name" value="YebC-like"/>
</dbReference>
<dbReference type="NCBIfam" id="NF001030">
    <property type="entry name" value="PRK00110.1"/>
    <property type="match status" value="1"/>
</dbReference>
<dbReference type="NCBIfam" id="NF009044">
    <property type="entry name" value="PRK12378.1"/>
    <property type="match status" value="1"/>
</dbReference>
<dbReference type="NCBIfam" id="TIGR01033">
    <property type="entry name" value="YebC/PmpR family DNA-binding transcriptional regulator"/>
    <property type="match status" value="1"/>
</dbReference>
<dbReference type="PANTHER" id="PTHR12532">
    <property type="entry name" value="TRANSLATIONAL ACTIVATOR OF CYTOCHROME C OXIDASE 1"/>
    <property type="match status" value="1"/>
</dbReference>
<dbReference type="PANTHER" id="PTHR12532:SF0">
    <property type="entry name" value="TRANSLATIONAL ACTIVATOR OF CYTOCHROME C OXIDASE 1"/>
    <property type="match status" value="1"/>
</dbReference>
<dbReference type="Pfam" id="PF20772">
    <property type="entry name" value="TACO1_YebC_N"/>
    <property type="match status" value="1"/>
</dbReference>
<dbReference type="Pfam" id="PF01709">
    <property type="entry name" value="Transcrip_reg"/>
    <property type="match status" value="1"/>
</dbReference>
<dbReference type="SUPFAM" id="SSF75625">
    <property type="entry name" value="YebC-like"/>
    <property type="match status" value="1"/>
</dbReference>
<reference key="1">
    <citation type="journal article" date="2010" name="Genome Biol.">
        <title>Structure and dynamics of the pan-genome of Streptococcus pneumoniae and closely related species.</title>
        <authorList>
            <person name="Donati C."/>
            <person name="Hiller N.L."/>
            <person name="Tettelin H."/>
            <person name="Muzzi A."/>
            <person name="Croucher N.J."/>
            <person name="Angiuoli S.V."/>
            <person name="Oggioni M."/>
            <person name="Dunning Hotopp J.C."/>
            <person name="Hu F.Z."/>
            <person name="Riley D.R."/>
            <person name="Covacci A."/>
            <person name="Mitchell T.J."/>
            <person name="Bentley S.D."/>
            <person name="Kilian M."/>
            <person name="Ehrlich G.D."/>
            <person name="Rappuoli R."/>
            <person name="Moxon E.R."/>
            <person name="Masignani V."/>
        </authorList>
    </citation>
    <scope>NUCLEOTIDE SEQUENCE [LARGE SCALE GENOMIC DNA]</scope>
    <source>
        <strain>JJA</strain>
    </source>
</reference>
<protein>
    <recommendedName>
        <fullName evidence="1">Probable transcriptional regulatory protein SPJ_1919</fullName>
    </recommendedName>
</protein>
<gene>
    <name type="ordered locus">SPJ_1919</name>
</gene>
<organism>
    <name type="scientific">Streptococcus pneumoniae (strain JJA)</name>
    <dbReference type="NCBI Taxonomy" id="488222"/>
    <lineage>
        <taxon>Bacteria</taxon>
        <taxon>Bacillati</taxon>
        <taxon>Bacillota</taxon>
        <taxon>Bacilli</taxon>
        <taxon>Lactobacillales</taxon>
        <taxon>Streptococcaceae</taxon>
        <taxon>Streptococcus</taxon>
    </lineage>
</organism>
<accession>C1CGK9</accession>